<keyword id="KW-0963">Cytoplasm</keyword>
<keyword id="KW-0255">Endonuclease</keyword>
<keyword id="KW-0378">Hydrolase</keyword>
<keyword id="KW-0479">Metal-binding</keyword>
<keyword id="KW-0540">Nuclease</keyword>
<keyword id="KW-0690">Ribosome biogenesis</keyword>
<keyword id="KW-0698">rRNA processing</keyword>
<keyword id="KW-0862">Zinc</keyword>
<sequence>MSDNAIHIDIMIEAGNWPDEASLESLVSKSVAAAWNNLGLKSATSELSVVFTDDASIQLLNGEWRGKDKPTNVLSFPAFPVKAGSQPGPMLGDIVIARETVEREAKEEGKPIENHLSHLVVHGFLHLLGYDHETDEEAEVMEAREREILHALAIPDPYAVSDEDINND</sequence>
<organism>
    <name type="scientific">Brucella melitensis biotype 1 (strain ATCC 23456 / CCUG 17765 / NCTC 10094 / 16M)</name>
    <dbReference type="NCBI Taxonomy" id="224914"/>
    <lineage>
        <taxon>Bacteria</taxon>
        <taxon>Pseudomonadati</taxon>
        <taxon>Pseudomonadota</taxon>
        <taxon>Alphaproteobacteria</taxon>
        <taxon>Hyphomicrobiales</taxon>
        <taxon>Brucellaceae</taxon>
        <taxon>Brucella/Ochrobactrum group</taxon>
        <taxon>Brucella</taxon>
    </lineage>
</organism>
<name>YBEY_BRUME</name>
<evidence type="ECO:0000255" key="1">
    <source>
        <dbReference type="HAMAP-Rule" id="MF_00009"/>
    </source>
</evidence>
<comment type="function">
    <text evidence="1">Single strand-specific metallo-endoribonuclease involved in late-stage 70S ribosome quality control and in maturation of the 3' terminus of the 16S rRNA.</text>
</comment>
<comment type="cofactor">
    <cofactor evidence="1">
        <name>Zn(2+)</name>
        <dbReference type="ChEBI" id="CHEBI:29105"/>
    </cofactor>
    <text evidence="1">Binds 1 zinc ion.</text>
</comment>
<comment type="subcellular location">
    <subcellularLocation>
        <location evidence="1">Cytoplasm</location>
    </subcellularLocation>
</comment>
<comment type="similarity">
    <text evidence="1">Belongs to the endoribonuclease YbeY family.</text>
</comment>
<proteinExistence type="inferred from homology"/>
<accession>P67132</accession>
<accession>Q8FXU1</accession>
<accession>Q8YEA4</accession>
<protein>
    <recommendedName>
        <fullName evidence="1">Endoribonuclease YbeY</fullName>
        <ecNumber evidence="1">3.1.-.-</ecNumber>
    </recommendedName>
</protein>
<feature type="chain" id="PRO_0000102423" description="Endoribonuclease YbeY">
    <location>
        <begin position="1"/>
        <end position="168"/>
    </location>
</feature>
<feature type="binding site" evidence="1">
    <location>
        <position position="122"/>
    </location>
    <ligand>
        <name>Zn(2+)</name>
        <dbReference type="ChEBI" id="CHEBI:29105"/>
        <note>catalytic</note>
    </ligand>
</feature>
<feature type="binding site" evidence="1">
    <location>
        <position position="126"/>
    </location>
    <ligand>
        <name>Zn(2+)</name>
        <dbReference type="ChEBI" id="CHEBI:29105"/>
        <note>catalytic</note>
    </ligand>
</feature>
<feature type="binding site" evidence="1">
    <location>
        <position position="132"/>
    </location>
    <ligand>
        <name>Zn(2+)</name>
        <dbReference type="ChEBI" id="CHEBI:29105"/>
        <note>catalytic</note>
    </ligand>
</feature>
<reference key="1">
    <citation type="journal article" date="2002" name="Proc. Natl. Acad. Sci. U.S.A.">
        <title>The genome sequence of the facultative intracellular pathogen Brucella melitensis.</title>
        <authorList>
            <person name="DelVecchio V.G."/>
            <person name="Kapatral V."/>
            <person name="Redkar R.J."/>
            <person name="Patra G."/>
            <person name="Mujer C."/>
            <person name="Los T."/>
            <person name="Ivanova N."/>
            <person name="Anderson I."/>
            <person name="Bhattacharyya A."/>
            <person name="Lykidis A."/>
            <person name="Reznik G."/>
            <person name="Jablonski L."/>
            <person name="Larsen N."/>
            <person name="D'Souza M."/>
            <person name="Bernal A."/>
            <person name="Mazur M."/>
            <person name="Goltsman E."/>
            <person name="Selkov E."/>
            <person name="Elzer P.H."/>
            <person name="Hagius S."/>
            <person name="O'Callaghan D."/>
            <person name="Letesson J.-J."/>
            <person name="Haselkorn R."/>
            <person name="Kyrpides N.C."/>
            <person name="Overbeek R."/>
        </authorList>
    </citation>
    <scope>NUCLEOTIDE SEQUENCE [LARGE SCALE GENOMIC DNA]</scope>
    <source>
        <strain>ATCC 23456 / CCUG 17765 / NCTC 10094 / 16M</strain>
    </source>
</reference>
<dbReference type="EC" id="3.1.-.-" evidence="1"/>
<dbReference type="EMBL" id="AE008917">
    <property type="protein sequence ID" value="AAL53155.1"/>
    <property type="molecule type" value="Genomic_DNA"/>
</dbReference>
<dbReference type="PIR" id="AH3498">
    <property type="entry name" value="AH3498"/>
</dbReference>
<dbReference type="SMR" id="P67132"/>
<dbReference type="KEGG" id="bme:BMEI1974"/>
<dbReference type="eggNOG" id="COG0319">
    <property type="taxonomic scope" value="Bacteria"/>
</dbReference>
<dbReference type="PhylomeDB" id="P67132"/>
<dbReference type="Proteomes" id="UP000000419">
    <property type="component" value="Chromosome I"/>
</dbReference>
<dbReference type="GO" id="GO:0005737">
    <property type="term" value="C:cytoplasm"/>
    <property type="evidence" value="ECO:0007669"/>
    <property type="project" value="UniProtKB-SubCell"/>
</dbReference>
<dbReference type="GO" id="GO:0004222">
    <property type="term" value="F:metalloendopeptidase activity"/>
    <property type="evidence" value="ECO:0007669"/>
    <property type="project" value="InterPro"/>
</dbReference>
<dbReference type="GO" id="GO:0004521">
    <property type="term" value="F:RNA endonuclease activity"/>
    <property type="evidence" value="ECO:0007669"/>
    <property type="project" value="UniProtKB-UniRule"/>
</dbReference>
<dbReference type="GO" id="GO:0008270">
    <property type="term" value="F:zinc ion binding"/>
    <property type="evidence" value="ECO:0007669"/>
    <property type="project" value="UniProtKB-UniRule"/>
</dbReference>
<dbReference type="GO" id="GO:0006364">
    <property type="term" value="P:rRNA processing"/>
    <property type="evidence" value="ECO:0007669"/>
    <property type="project" value="UniProtKB-UniRule"/>
</dbReference>
<dbReference type="Gene3D" id="3.40.390.30">
    <property type="entry name" value="Metalloproteases ('zincins'), catalytic domain"/>
    <property type="match status" value="1"/>
</dbReference>
<dbReference type="HAMAP" id="MF_00009">
    <property type="entry name" value="Endoribonucl_YbeY"/>
    <property type="match status" value="1"/>
</dbReference>
<dbReference type="InterPro" id="IPR023091">
    <property type="entry name" value="MetalPrtase_cat_dom_sf_prd"/>
</dbReference>
<dbReference type="InterPro" id="IPR002036">
    <property type="entry name" value="YbeY"/>
</dbReference>
<dbReference type="InterPro" id="IPR020549">
    <property type="entry name" value="YbeY_CS"/>
</dbReference>
<dbReference type="NCBIfam" id="TIGR00043">
    <property type="entry name" value="rRNA maturation RNase YbeY"/>
    <property type="match status" value="1"/>
</dbReference>
<dbReference type="PANTHER" id="PTHR46986">
    <property type="entry name" value="ENDORIBONUCLEASE YBEY, CHLOROPLASTIC"/>
    <property type="match status" value="1"/>
</dbReference>
<dbReference type="PANTHER" id="PTHR46986:SF1">
    <property type="entry name" value="ENDORIBONUCLEASE YBEY, CHLOROPLASTIC"/>
    <property type="match status" value="1"/>
</dbReference>
<dbReference type="Pfam" id="PF02130">
    <property type="entry name" value="YbeY"/>
    <property type="match status" value="1"/>
</dbReference>
<dbReference type="SUPFAM" id="SSF55486">
    <property type="entry name" value="Metalloproteases ('zincins'), catalytic domain"/>
    <property type="match status" value="1"/>
</dbReference>
<dbReference type="PROSITE" id="PS01306">
    <property type="entry name" value="UPF0054"/>
    <property type="match status" value="1"/>
</dbReference>
<gene>
    <name evidence="1" type="primary">ybeY</name>
    <name type="ordered locus">BMEI1974</name>
</gene>